<sequence>MMLPADFFVPVSKMMLLALLLSIIICCGGAQRSEPMFTAVTDTVLPQDYDSNPTQLNYGVAITDVDNDGDFEVVVAGYNGPNLVLKYIKEKGHLVNIAVDERSSPYYALRDRQGNAIGVAACDIDGDGREEIYFLNTNNAFSGIATYSDKLFTFRNGRWEDLFSDEVNLRRGVANRFSGRSVACIDRKGSGRYSFYIANYANGNVGPHALIELDETASNLSRGIIVLSNVAAELGLNKYTGGRGIAVGPIVNSAASDIFCDNENGPNFLFQNKGDGTFVDIASSTGVDDVYQHGRGVALADFNRDGKVDIVYGNWNGPHRLFLQMNTNGKVRFRDIATQKFSMPSPIRTVIAADFDNDQELEVFFNNIAYRGPSANRMFRVGRREHADPFMEELNPGDASEPDGRGTGGAVTDFDGDGMLDLILSHGESMAQPLSVFKGKQGLKNNWLRVIPRTKFGAFARGAKVVLYTKKSGAHLRIIDGGSGYLCEMEPVAHFGLGKDEASSLEVTWPDGKIFTRSVAEGEINSVLDIAYPHEDDTVTKPTDIECGQGFSVNENGRCTDTDECIQFPFVCPREKPVCINTYGGYKCRPNRRCSRGFEPNEDGTACVAQVAYFGSYPSSASRSQALFLHCTASLLGLGFYFQIYTL</sequence>
<evidence type="ECO:0000250" key="1"/>
<evidence type="ECO:0000255" key="2"/>
<evidence type="ECO:0000305" key="3"/>
<name>CRAC1_XENTR</name>
<comment type="subcellular location">
    <subcellularLocation>
        <location evidence="1">Secreted</location>
        <location evidence="1">Extracellular space</location>
        <location evidence="1">Extracellular matrix</location>
    </subcellularLocation>
</comment>
<comment type="caution">
    <text evidence="3">It is uncertain whether Met-1 or Met-2 is the initiator.</text>
</comment>
<comment type="sequence caution" evidence="3">
    <conflict type="erroneous initiation">
        <sequence resource="EMBL-CDS" id="AAI21478"/>
    </conflict>
</comment>
<organism>
    <name type="scientific">Xenopus tropicalis</name>
    <name type="common">Western clawed frog</name>
    <name type="synonym">Silurana tropicalis</name>
    <dbReference type="NCBI Taxonomy" id="8364"/>
    <lineage>
        <taxon>Eukaryota</taxon>
        <taxon>Metazoa</taxon>
        <taxon>Chordata</taxon>
        <taxon>Craniata</taxon>
        <taxon>Vertebrata</taxon>
        <taxon>Euteleostomi</taxon>
        <taxon>Amphibia</taxon>
        <taxon>Batrachia</taxon>
        <taxon>Anura</taxon>
        <taxon>Pipoidea</taxon>
        <taxon>Pipidae</taxon>
        <taxon>Xenopodinae</taxon>
        <taxon>Xenopus</taxon>
        <taxon>Silurana</taxon>
    </lineage>
</organism>
<gene>
    <name type="primary">crtac1</name>
</gene>
<dbReference type="EMBL" id="DQ351712">
    <property type="protein sequence ID" value="ABC86210.1"/>
    <property type="molecule type" value="mRNA"/>
</dbReference>
<dbReference type="EMBL" id="BC121477">
    <property type="protein sequence ID" value="AAI21478.1"/>
    <property type="status" value="ALT_INIT"/>
    <property type="molecule type" value="mRNA"/>
</dbReference>
<dbReference type="RefSeq" id="NP_001072373.1">
    <property type="nucleotide sequence ID" value="NM_001078905.1"/>
</dbReference>
<dbReference type="SMR" id="Q0V9M0"/>
<dbReference type="FunCoup" id="Q0V9M0">
    <property type="interactions" value="92"/>
</dbReference>
<dbReference type="PaxDb" id="8364-ENSXETP00000063347"/>
<dbReference type="DNASU" id="779826"/>
<dbReference type="GeneID" id="779826"/>
<dbReference type="KEGG" id="xtr:779826"/>
<dbReference type="CTD" id="55118"/>
<dbReference type="eggNOG" id="ENOG502QQ5V">
    <property type="taxonomic scope" value="Eukaryota"/>
</dbReference>
<dbReference type="InParanoid" id="Q0V9M0"/>
<dbReference type="OrthoDB" id="10022113at2759"/>
<dbReference type="Proteomes" id="UP000008143">
    <property type="component" value="Chromosome 7"/>
</dbReference>
<dbReference type="GO" id="GO:0005576">
    <property type="term" value="C:extracellular region"/>
    <property type="evidence" value="ECO:0007669"/>
    <property type="project" value="UniProtKB-KW"/>
</dbReference>
<dbReference type="GO" id="GO:0005509">
    <property type="term" value="F:calcium ion binding"/>
    <property type="evidence" value="ECO:0007669"/>
    <property type="project" value="InterPro"/>
</dbReference>
<dbReference type="Gene3D" id="2.130.10.130">
    <property type="entry name" value="Integrin alpha, N-terminal"/>
    <property type="match status" value="1"/>
</dbReference>
<dbReference type="Gene3D" id="2.10.25.10">
    <property type="entry name" value="Laminin"/>
    <property type="match status" value="1"/>
</dbReference>
<dbReference type="InterPro" id="IPR027039">
    <property type="entry name" value="Crtac1"/>
</dbReference>
<dbReference type="InterPro" id="IPR001881">
    <property type="entry name" value="EGF-like_Ca-bd_dom"/>
</dbReference>
<dbReference type="InterPro" id="IPR018097">
    <property type="entry name" value="EGF_Ca-bd_CS"/>
</dbReference>
<dbReference type="InterPro" id="IPR013517">
    <property type="entry name" value="FG-GAP"/>
</dbReference>
<dbReference type="InterPro" id="IPR028994">
    <property type="entry name" value="Integrin_alpha_N"/>
</dbReference>
<dbReference type="InterPro" id="IPR049883">
    <property type="entry name" value="NOTCH1_EGF-like"/>
</dbReference>
<dbReference type="InterPro" id="IPR011519">
    <property type="entry name" value="UnbV_ASPIC"/>
</dbReference>
<dbReference type="PANTHER" id="PTHR16026">
    <property type="entry name" value="CARTILAGE ACIDIC PROTEIN 1"/>
    <property type="match status" value="1"/>
</dbReference>
<dbReference type="PANTHER" id="PTHR16026:SF0">
    <property type="entry name" value="CARTILAGE ACIDIC PROTEIN 1"/>
    <property type="match status" value="1"/>
</dbReference>
<dbReference type="Pfam" id="PF07645">
    <property type="entry name" value="EGF_CA"/>
    <property type="match status" value="1"/>
</dbReference>
<dbReference type="Pfam" id="PF13517">
    <property type="entry name" value="FG-GAP_3"/>
    <property type="match status" value="2"/>
</dbReference>
<dbReference type="Pfam" id="PF07593">
    <property type="entry name" value="UnbV_ASPIC"/>
    <property type="match status" value="1"/>
</dbReference>
<dbReference type="SMART" id="SM00179">
    <property type="entry name" value="EGF_CA"/>
    <property type="match status" value="1"/>
</dbReference>
<dbReference type="SUPFAM" id="SSF57196">
    <property type="entry name" value="EGF/Laminin"/>
    <property type="match status" value="1"/>
</dbReference>
<dbReference type="SUPFAM" id="SSF69318">
    <property type="entry name" value="Integrin alpha N-terminal domain"/>
    <property type="match status" value="1"/>
</dbReference>
<dbReference type="PROSITE" id="PS01187">
    <property type="entry name" value="EGF_CA"/>
    <property type="match status" value="1"/>
</dbReference>
<proteinExistence type="evidence at transcript level"/>
<protein>
    <recommendedName>
        <fullName>Cartilage acidic protein 1</fullName>
    </recommendedName>
    <alternativeName>
        <fullName>ASPIC</fullName>
    </alternativeName>
</protein>
<accession>Q0V9M0</accession>
<accession>A1XF96</accession>
<reference key="1">
    <citation type="submission" date="2006-01" db="EMBL/GenBank/DDBJ databases">
        <title>Identification of extracellular matrix proteins from lower vertebrates.</title>
        <authorList>
            <person name="Redruello B."/>
            <person name="Canario A.V.M."/>
            <person name="Power D.M."/>
        </authorList>
    </citation>
    <scope>NUCLEOTIDE SEQUENCE [MRNA]</scope>
</reference>
<reference key="2">
    <citation type="submission" date="2006-08" db="EMBL/GenBank/DDBJ databases">
        <authorList>
            <consortium name="NIH - Xenopus Gene Collection (XGC) project"/>
        </authorList>
    </citation>
    <scope>NUCLEOTIDE SEQUENCE [LARGE SCALE MRNA]</scope>
    <source>
        <tissue>Brain</tissue>
    </source>
</reference>
<feature type="signal peptide" evidence="2">
    <location>
        <begin position="1"/>
        <end position="30"/>
    </location>
</feature>
<feature type="chain" id="PRO_0000383351" description="Cartilage acidic protein 1">
    <location>
        <begin position="31"/>
        <end position="647"/>
    </location>
</feature>
<feature type="repeat" description="FG-GAP 1; atypical">
    <location>
        <begin position="48"/>
        <end position="90"/>
    </location>
</feature>
<feature type="repeat" description="FG-GAP 2; atypical">
    <location>
        <begin position="107"/>
        <end position="149"/>
    </location>
</feature>
<feature type="repeat" description="FG-GAP 3; atypical">
    <location>
        <begin position="285"/>
        <end position="335"/>
    </location>
</feature>
<feature type="repeat" description="FG-GAP 4; atypical">
    <location>
        <begin position="397"/>
        <end position="439"/>
    </location>
</feature>
<feature type="domain" description="EGF-like">
    <location>
        <begin position="561"/>
        <end position="607"/>
    </location>
</feature>
<feature type="disulfide bond" evidence="2">
    <location>
        <begin position="565"/>
        <end position="579"/>
    </location>
</feature>
<feature type="disulfide bond" evidence="2">
    <location>
        <begin position="572"/>
        <end position="588"/>
    </location>
</feature>
<feature type="disulfide bond" evidence="2">
    <location>
        <begin position="594"/>
        <end position="607"/>
    </location>
</feature>
<keyword id="KW-1015">Disulfide bond</keyword>
<keyword id="KW-0245">EGF-like domain</keyword>
<keyword id="KW-0272">Extracellular matrix</keyword>
<keyword id="KW-1185">Reference proteome</keyword>
<keyword id="KW-0677">Repeat</keyword>
<keyword id="KW-0964">Secreted</keyword>
<keyword id="KW-0732">Signal</keyword>